<evidence type="ECO:0000255" key="1">
    <source>
        <dbReference type="HAMAP-Rule" id="MF_00693"/>
    </source>
</evidence>
<sequence>MAGHSKWSQIKRSKAVVDAKRGAVFTRLAREISVAARSGGDPNGNFQLRTAINKAKAARMPAANIERAIAKGSGQDQNGACQLEAIRYEGYGPGGVAVLIEALTDNRNRTAADLRLTFNKHGGKLGESGCVAYLFEQRSEVYLSAQSAQDGGKVSEDALLENLLELEADGYQLIDDGAVVYGPFQALEGLQAGLRDQGWIVEGWEHCWRPLTTISQADQKSEDQCLQLLEALDELDDVHHISSNLES</sequence>
<feature type="chain" id="PRO_0000175867" description="Probable transcriptional regulatory protein PMT_1423">
    <location>
        <begin position="1"/>
        <end position="247"/>
    </location>
</feature>
<protein>
    <recommendedName>
        <fullName evidence="1">Probable transcriptional regulatory protein PMT_1423</fullName>
    </recommendedName>
</protein>
<gene>
    <name type="ordered locus">PMT_1423</name>
</gene>
<organism>
    <name type="scientific">Prochlorococcus marinus (strain MIT 9313)</name>
    <dbReference type="NCBI Taxonomy" id="74547"/>
    <lineage>
        <taxon>Bacteria</taxon>
        <taxon>Bacillati</taxon>
        <taxon>Cyanobacteriota</taxon>
        <taxon>Cyanophyceae</taxon>
        <taxon>Synechococcales</taxon>
        <taxon>Prochlorococcaceae</taxon>
        <taxon>Prochlorococcus</taxon>
    </lineage>
</organism>
<accession>Q7V5W3</accession>
<keyword id="KW-0963">Cytoplasm</keyword>
<keyword id="KW-0238">DNA-binding</keyword>
<keyword id="KW-1185">Reference proteome</keyword>
<keyword id="KW-0804">Transcription</keyword>
<keyword id="KW-0805">Transcription regulation</keyword>
<reference key="1">
    <citation type="journal article" date="2003" name="Nature">
        <title>Genome divergence in two Prochlorococcus ecotypes reflects oceanic niche differentiation.</title>
        <authorList>
            <person name="Rocap G."/>
            <person name="Larimer F.W."/>
            <person name="Lamerdin J.E."/>
            <person name="Malfatti S."/>
            <person name="Chain P."/>
            <person name="Ahlgren N.A."/>
            <person name="Arellano A."/>
            <person name="Coleman M."/>
            <person name="Hauser L."/>
            <person name="Hess W.R."/>
            <person name="Johnson Z.I."/>
            <person name="Land M.L."/>
            <person name="Lindell D."/>
            <person name="Post A.F."/>
            <person name="Regala W."/>
            <person name="Shah M."/>
            <person name="Shaw S.L."/>
            <person name="Steglich C."/>
            <person name="Sullivan M.B."/>
            <person name="Ting C.S."/>
            <person name="Tolonen A."/>
            <person name="Webb E.A."/>
            <person name="Zinser E.R."/>
            <person name="Chisholm S.W."/>
        </authorList>
    </citation>
    <scope>NUCLEOTIDE SEQUENCE [LARGE SCALE GENOMIC DNA]</scope>
    <source>
        <strain>MIT 9313</strain>
    </source>
</reference>
<proteinExistence type="inferred from homology"/>
<comment type="subcellular location">
    <subcellularLocation>
        <location evidence="1">Cytoplasm</location>
    </subcellularLocation>
</comment>
<comment type="similarity">
    <text evidence="1">Belongs to the TACO1 family.</text>
</comment>
<name>Y1423_PROMM</name>
<dbReference type="EMBL" id="BX548175">
    <property type="protein sequence ID" value="CAE21598.1"/>
    <property type="molecule type" value="Genomic_DNA"/>
</dbReference>
<dbReference type="RefSeq" id="WP_011130791.1">
    <property type="nucleotide sequence ID" value="NC_005071.1"/>
</dbReference>
<dbReference type="SMR" id="Q7V5W3"/>
<dbReference type="KEGG" id="pmt:PMT_1423"/>
<dbReference type="eggNOG" id="COG0217">
    <property type="taxonomic scope" value="Bacteria"/>
</dbReference>
<dbReference type="HOGENOM" id="CLU_062974_2_2_3"/>
<dbReference type="OrthoDB" id="9781053at2"/>
<dbReference type="Proteomes" id="UP000001423">
    <property type="component" value="Chromosome"/>
</dbReference>
<dbReference type="GO" id="GO:0005829">
    <property type="term" value="C:cytosol"/>
    <property type="evidence" value="ECO:0007669"/>
    <property type="project" value="TreeGrafter"/>
</dbReference>
<dbReference type="GO" id="GO:0003677">
    <property type="term" value="F:DNA binding"/>
    <property type="evidence" value="ECO:0007669"/>
    <property type="project" value="UniProtKB-UniRule"/>
</dbReference>
<dbReference type="GO" id="GO:0006355">
    <property type="term" value="P:regulation of DNA-templated transcription"/>
    <property type="evidence" value="ECO:0007669"/>
    <property type="project" value="UniProtKB-UniRule"/>
</dbReference>
<dbReference type="FunFam" id="1.10.10.200:FF:000002">
    <property type="entry name" value="Probable transcriptional regulatory protein CLM62_37755"/>
    <property type="match status" value="1"/>
</dbReference>
<dbReference type="Gene3D" id="1.10.10.200">
    <property type="match status" value="1"/>
</dbReference>
<dbReference type="Gene3D" id="3.30.70.980">
    <property type="match status" value="2"/>
</dbReference>
<dbReference type="HAMAP" id="MF_00693">
    <property type="entry name" value="Transcrip_reg_TACO1"/>
    <property type="match status" value="1"/>
</dbReference>
<dbReference type="InterPro" id="IPR017856">
    <property type="entry name" value="Integrase-like_N"/>
</dbReference>
<dbReference type="InterPro" id="IPR048300">
    <property type="entry name" value="TACO1_YebC-like_2nd/3rd_dom"/>
</dbReference>
<dbReference type="InterPro" id="IPR049083">
    <property type="entry name" value="TACO1_YebC_N"/>
</dbReference>
<dbReference type="InterPro" id="IPR002876">
    <property type="entry name" value="Transcrip_reg_TACO1-like"/>
</dbReference>
<dbReference type="InterPro" id="IPR026564">
    <property type="entry name" value="Transcrip_reg_TACO1-like_dom3"/>
</dbReference>
<dbReference type="InterPro" id="IPR029072">
    <property type="entry name" value="YebC-like"/>
</dbReference>
<dbReference type="NCBIfam" id="NF001030">
    <property type="entry name" value="PRK00110.1"/>
    <property type="match status" value="1"/>
</dbReference>
<dbReference type="NCBIfam" id="NF009044">
    <property type="entry name" value="PRK12378.1"/>
    <property type="match status" value="1"/>
</dbReference>
<dbReference type="NCBIfam" id="TIGR01033">
    <property type="entry name" value="YebC/PmpR family DNA-binding transcriptional regulator"/>
    <property type="match status" value="1"/>
</dbReference>
<dbReference type="PANTHER" id="PTHR12532:SF6">
    <property type="entry name" value="TRANSCRIPTIONAL REGULATORY PROTEIN YEBC-RELATED"/>
    <property type="match status" value="1"/>
</dbReference>
<dbReference type="PANTHER" id="PTHR12532">
    <property type="entry name" value="TRANSLATIONAL ACTIVATOR OF CYTOCHROME C OXIDASE 1"/>
    <property type="match status" value="1"/>
</dbReference>
<dbReference type="Pfam" id="PF20772">
    <property type="entry name" value="TACO1_YebC_N"/>
    <property type="match status" value="1"/>
</dbReference>
<dbReference type="Pfam" id="PF01709">
    <property type="entry name" value="Transcrip_reg"/>
    <property type="match status" value="1"/>
</dbReference>
<dbReference type="SUPFAM" id="SSF75625">
    <property type="entry name" value="YebC-like"/>
    <property type="match status" value="1"/>
</dbReference>